<protein>
    <recommendedName>
        <fullName evidence="2">Large ribosomal subunit protein eL30</fullName>
    </recommendedName>
    <alternativeName>
        <fullName>60S ribosomal protein L30</fullName>
    </alternativeName>
</protein>
<proteinExistence type="inferred from homology"/>
<dbReference type="EMBL" id="AB093680">
    <property type="protein sequence ID" value="BAC21654.1"/>
    <property type="molecule type" value="mRNA"/>
</dbReference>
<dbReference type="RefSeq" id="NP_001274651.1">
    <property type="nucleotide sequence ID" value="NM_001287722.1"/>
</dbReference>
<dbReference type="RefSeq" id="XP_045254473.1">
    <property type="nucleotide sequence ID" value="XM_045398538.1"/>
</dbReference>
<dbReference type="SMR" id="Q76KA2"/>
<dbReference type="STRING" id="9541.ENSMFAP00000017672"/>
<dbReference type="Ensembl" id="ENSMFAT00000068214.2">
    <property type="protein sequence ID" value="ENSMFAP00000017672.1"/>
    <property type="gene ID" value="ENSMFAG00000031945.2"/>
</dbReference>
<dbReference type="GeneID" id="102126326"/>
<dbReference type="VEuPathDB" id="HostDB:ENSMFAG00000031945"/>
<dbReference type="eggNOG" id="KOG2988">
    <property type="taxonomic scope" value="Eukaryota"/>
</dbReference>
<dbReference type="GeneTree" id="ENSGT00390000012138"/>
<dbReference type="OMA" id="YFQGGNN"/>
<dbReference type="Proteomes" id="UP000233100">
    <property type="component" value="Chromosome 8"/>
</dbReference>
<dbReference type="Bgee" id="ENSMFAG00000031945">
    <property type="expression patterns" value="Expressed in lymph node and 13 other cell types or tissues"/>
</dbReference>
<dbReference type="GO" id="GO:0022625">
    <property type="term" value="C:cytosolic large ribosomal subunit"/>
    <property type="evidence" value="ECO:0007669"/>
    <property type="project" value="InterPro"/>
</dbReference>
<dbReference type="GO" id="GO:0003723">
    <property type="term" value="F:RNA binding"/>
    <property type="evidence" value="ECO:0007669"/>
    <property type="project" value="InterPro"/>
</dbReference>
<dbReference type="GO" id="GO:0003735">
    <property type="term" value="F:structural constituent of ribosome"/>
    <property type="evidence" value="ECO:0007669"/>
    <property type="project" value="InterPro"/>
</dbReference>
<dbReference type="FunFam" id="3.30.1330.30:FF:000001">
    <property type="entry name" value="60S ribosomal protein L30"/>
    <property type="match status" value="1"/>
</dbReference>
<dbReference type="Gene3D" id="3.30.1330.30">
    <property type="match status" value="1"/>
</dbReference>
<dbReference type="HAMAP" id="MF_00481">
    <property type="entry name" value="Ribosomal_eL30"/>
    <property type="match status" value="1"/>
</dbReference>
<dbReference type="InterPro" id="IPR000231">
    <property type="entry name" value="Ribosomal_eL30"/>
</dbReference>
<dbReference type="InterPro" id="IPR039109">
    <property type="entry name" value="Ribosomal_eL30-like"/>
</dbReference>
<dbReference type="InterPro" id="IPR029064">
    <property type="entry name" value="Ribosomal_eL30-like_sf"/>
</dbReference>
<dbReference type="InterPro" id="IPR022991">
    <property type="entry name" value="Ribosomal_eL30_CS"/>
</dbReference>
<dbReference type="InterPro" id="IPR004038">
    <property type="entry name" value="Ribosomal_eL8/eL30/eS12/Gad45"/>
</dbReference>
<dbReference type="NCBIfam" id="NF002172">
    <property type="entry name" value="PRK01018.1"/>
    <property type="match status" value="1"/>
</dbReference>
<dbReference type="PANTHER" id="PTHR11449">
    <property type="entry name" value="RIBOSOMAL PROTEIN L30"/>
    <property type="match status" value="1"/>
</dbReference>
<dbReference type="Pfam" id="PF01248">
    <property type="entry name" value="Ribosomal_L7Ae"/>
    <property type="match status" value="1"/>
</dbReference>
<dbReference type="SUPFAM" id="SSF55315">
    <property type="entry name" value="L30e-like"/>
    <property type="match status" value="1"/>
</dbReference>
<dbReference type="PROSITE" id="PS00709">
    <property type="entry name" value="RIBOSOMAL_L30E_1"/>
    <property type="match status" value="1"/>
</dbReference>
<dbReference type="PROSITE" id="PS00993">
    <property type="entry name" value="RIBOSOMAL_L30E_2"/>
    <property type="match status" value="1"/>
</dbReference>
<evidence type="ECO:0000250" key="1">
    <source>
        <dbReference type="UniProtKB" id="P62888"/>
    </source>
</evidence>
<evidence type="ECO:0000305" key="2"/>
<comment type="function">
    <text evidence="1">Component of the large ribosomal subunit. The ribosome is a large ribonucleoprotein complex responsible for the synthesis of proteins in the cell.</text>
</comment>
<comment type="subunit">
    <text evidence="1">Component of the large ribosomal subunit.</text>
</comment>
<comment type="subcellular location">
    <subcellularLocation>
        <location evidence="1">Cytoplasm</location>
    </subcellularLocation>
</comment>
<comment type="similarity">
    <text evidence="2">Belongs to the eukaryotic ribosomal protein eL30 family.</text>
</comment>
<gene>
    <name type="primary">RPL30</name>
    <name type="ORF">QbsB-10313</name>
</gene>
<feature type="chain" id="PRO_0000146121" description="Large ribosomal subunit protein eL30">
    <location>
        <begin position="1"/>
        <end position="115"/>
    </location>
</feature>
<feature type="modified residue" description="Phosphoserine" evidence="1">
    <location>
        <position position="10"/>
    </location>
</feature>
<feature type="modified residue" description="Phosphoserine" evidence="1">
    <location>
        <position position="16"/>
    </location>
</feature>
<feature type="modified residue" description="N6-acetyllysine; alternate" evidence="1">
    <location>
        <position position="26"/>
    </location>
</feature>
<feature type="cross-link" description="Glycyl lysine isopeptide (Lys-Gly) (interchain with G-Cter in SUMO2); alternate" evidence="1">
    <location>
        <position position="26"/>
    </location>
</feature>
<reference key="1">
    <citation type="journal article" date="2001" name="Gene">
        <title>Assignment of 118 novel cDNAs of cynomolgus monkey brain to human chromosomes.</title>
        <authorList>
            <person name="Osada N."/>
            <person name="Hida M."/>
            <person name="Kususda J."/>
            <person name="Tanuma R."/>
            <person name="Iseki K."/>
            <person name="Hirata M."/>
            <person name="Suto Y."/>
            <person name="Hirai M."/>
            <person name="Terao K."/>
            <person name="Suzuki Y."/>
            <person name="Sugano S."/>
            <person name="Hashimoto K."/>
        </authorList>
    </citation>
    <scope>NUCLEOTIDE SEQUENCE [LARGE SCALE MRNA]</scope>
    <source>
        <tissue>Brain stem</tissue>
    </source>
</reference>
<reference key="2">
    <citation type="journal article" date="2001" name="Gene">
        <authorList>
            <person name="Osada N."/>
            <person name="Hida M."/>
            <person name="Kusuda J."/>
            <person name="Tanuma R."/>
            <person name="Iseki K."/>
            <person name="Hirata M."/>
            <person name="Suto Y."/>
            <person name="Hirai M."/>
            <person name="Terao K."/>
            <person name="Suzuki Y."/>
            <person name="Sugano S."/>
            <person name="Hashimoto K."/>
            <person name="Kususda J."/>
        </authorList>
    </citation>
    <scope>ERRATUM OF PUBMED:11574149</scope>
</reference>
<keyword id="KW-0007">Acetylation</keyword>
<keyword id="KW-0963">Cytoplasm</keyword>
<keyword id="KW-1017">Isopeptide bond</keyword>
<keyword id="KW-0597">Phosphoprotein</keyword>
<keyword id="KW-1185">Reference proteome</keyword>
<keyword id="KW-0687">Ribonucleoprotein</keyword>
<keyword id="KW-0689">Ribosomal protein</keyword>
<keyword id="KW-0832">Ubl conjugation</keyword>
<sequence>MVAAKKTKKSLESINSRLQLVMKSGKYVLGYKQTLKMIRQGKAKLVILANNCPALRKSEIEYYAMLAKTGVHHYSGNNIELGTACGKYYRVCTLAIIDPGDSDIIRSMPEQTGEK</sequence>
<organism>
    <name type="scientific">Macaca fascicularis</name>
    <name type="common">Crab-eating macaque</name>
    <name type="synonym">Cynomolgus monkey</name>
    <dbReference type="NCBI Taxonomy" id="9541"/>
    <lineage>
        <taxon>Eukaryota</taxon>
        <taxon>Metazoa</taxon>
        <taxon>Chordata</taxon>
        <taxon>Craniata</taxon>
        <taxon>Vertebrata</taxon>
        <taxon>Euteleostomi</taxon>
        <taxon>Mammalia</taxon>
        <taxon>Eutheria</taxon>
        <taxon>Euarchontoglires</taxon>
        <taxon>Primates</taxon>
        <taxon>Haplorrhini</taxon>
        <taxon>Catarrhini</taxon>
        <taxon>Cercopithecidae</taxon>
        <taxon>Cercopithecinae</taxon>
        <taxon>Macaca</taxon>
    </lineage>
</organism>
<name>RL30_MACFA</name>
<accession>Q76KA2</accession>